<gene>
    <name evidence="1" type="primary">cca</name>
    <name type="ordered locus">LEUM_0756</name>
</gene>
<evidence type="ECO:0000255" key="1">
    <source>
        <dbReference type="HAMAP-Rule" id="MF_01263"/>
    </source>
</evidence>
<name>CCA_LEUMM</name>
<proteinExistence type="inferred from homology"/>
<reference key="1">
    <citation type="journal article" date="2006" name="Proc. Natl. Acad. Sci. U.S.A.">
        <title>Comparative genomics of the lactic acid bacteria.</title>
        <authorList>
            <person name="Makarova K.S."/>
            <person name="Slesarev A."/>
            <person name="Wolf Y.I."/>
            <person name="Sorokin A."/>
            <person name="Mirkin B."/>
            <person name="Koonin E.V."/>
            <person name="Pavlov A."/>
            <person name="Pavlova N."/>
            <person name="Karamychev V."/>
            <person name="Polouchine N."/>
            <person name="Shakhova V."/>
            <person name="Grigoriev I."/>
            <person name="Lou Y."/>
            <person name="Rohksar D."/>
            <person name="Lucas S."/>
            <person name="Huang K."/>
            <person name="Goodstein D.M."/>
            <person name="Hawkins T."/>
            <person name="Plengvidhya V."/>
            <person name="Welker D."/>
            <person name="Hughes J."/>
            <person name="Goh Y."/>
            <person name="Benson A."/>
            <person name="Baldwin K."/>
            <person name="Lee J.-H."/>
            <person name="Diaz-Muniz I."/>
            <person name="Dosti B."/>
            <person name="Smeianov V."/>
            <person name="Wechter W."/>
            <person name="Barabote R."/>
            <person name="Lorca G."/>
            <person name="Altermann E."/>
            <person name="Barrangou R."/>
            <person name="Ganesan B."/>
            <person name="Xie Y."/>
            <person name="Rawsthorne H."/>
            <person name="Tamir D."/>
            <person name="Parker C."/>
            <person name="Breidt F."/>
            <person name="Broadbent J.R."/>
            <person name="Hutkins R."/>
            <person name="O'Sullivan D."/>
            <person name="Steele J."/>
            <person name="Unlu G."/>
            <person name="Saier M.H. Jr."/>
            <person name="Klaenhammer T."/>
            <person name="Richardson P."/>
            <person name="Kozyavkin S."/>
            <person name="Weimer B.C."/>
            <person name="Mills D.A."/>
        </authorList>
    </citation>
    <scope>NUCLEOTIDE SEQUENCE [LARGE SCALE GENOMIC DNA]</scope>
    <source>
        <strain>ATCC 8293 / DSM 20343 / BCRC 11652 / CCM 1803 / JCM 6124 / NCDO 523 / NBRC 100496 / NCIMB 8023 / NCTC 12954 / NRRL B-1118 / 37Y</strain>
    </source>
</reference>
<keyword id="KW-0067">ATP-binding</keyword>
<keyword id="KW-0460">Magnesium</keyword>
<keyword id="KW-0479">Metal-binding</keyword>
<keyword id="KW-0547">Nucleotide-binding</keyword>
<keyword id="KW-0548">Nucleotidyltransferase</keyword>
<keyword id="KW-1185">Reference proteome</keyword>
<keyword id="KW-0692">RNA repair</keyword>
<keyword id="KW-0694">RNA-binding</keyword>
<keyword id="KW-0808">Transferase</keyword>
<keyword id="KW-0819">tRNA processing</keyword>
<organism>
    <name type="scientific">Leuconostoc mesenteroides subsp. mesenteroides (strain ATCC 8293 / DSM 20343 / BCRC 11652 / CCM 1803 / JCM 6124 / NCDO 523 / NBRC 100496 / NCIMB 8023 / NCTC 12954 / NRRL B-1118 / 37Y)</name>
    <dbReference type="NCBI Taxonomy" id="203120"/>
    <lineage>
        <taxon>Bacteria</taxon>
        <taxon>Bacillati</taxon>
        <taxon>Bacillota</taxon>
        <taxon>Bacilli</taxon>
        <taxon>Lactobacillales</taxon>
        <taxon>Lactobacillaceae</taxon>
        <taxon>Leuconostoc</taxon>
    </lineage>
</organism>
<comment type="function">
    <text evidence="1">Catalyzes the addition and repair of the essential 3'-terminal CCA sequence in tRNAs without using a nucleic acid template. Adds these three nucleotides in the order of C, C, and A to the tRNA nucleotide-73, using CTP and ATP as substrates and producing inorganic pyrophosphate. tRNA 3'-terminal CCA addition is required both for tRNA processing and repair. Also involved in tRNA surveillance by mediating tandem CCA addition to generate a CCACCA at the 3' terminus of unstable tRNAs. While stable tRNAs receive only 3'-terminal CCA, unstable tRNAs are marked with CCACCA and rapidly degraded.</text>
</comment>
<comment type="catalytic activity">
    <reaction evidence="1">
        <text>a tRNA precursor + 2 CTP + ATP = a tRNA with a 3' CCA end + 3 diphosphate</text>
        <dbReference type="Rhea" id="RHEA:14433"/>
        <dbReference type="Rhea" id="RHEA-COMP:10465"/>
        <dbReference type="Rhea" id="RHEA-COMP:10468"/>
        <dbReference type="ChEBI" id="CHEBI:30616"/>
        <dbReference type="ChEBI" id="CHEBI:33019"/>
        <dbReference type="ChEBI" id="CHEBI:37563"/>
        <dbReference type="ChEBI" id="CHEBI:74896"/>
        <dbReference type="ChEBI" id="CHEBI:83071"/>
        <dbReference type="EC" id="2.7.7.72"/>
    </reaction>
</comment>
<comment type="catalytic activity">
    <reaction evidence="1">
        <text>a tRNA with a 3' CCA end + 2 CTP + ATP = a tRNA with a 3' CCACCA end + 3 diphosphate</text>
        <dbReference type="Rhea" id="RHEA:76235"/>
        <dbReference type="Rhea" id="RHEA-COMP:10468"/>
        <dbReference type="Rhea" id="RHEA-COMP:18655"/>
        <dbReference type="ChEBI" id="CHEBI:30616"/>
        <dbReference type="ChEBI" id="CHEBI:33019"/>
        <dbReference type="ChEBI" id="CHEBI:37563"/>
        <dbReference type="ChEBI" id="CHEBI:83071"/>
        <dbReference type="ChEBI" id="CHEBI:195187"/>
    </reaction>
    <physiologicalReaction direction="left-to-right" evidence="1">
        <dbReference type="Rhea" id="RHEA:76236"/>
    </physiologicalReaction>
</comment>
<comment type="cofactor">
    <cofactor evidence="1">
        <name>Mg(2+)</name>
        <dbReference type="ChEBI" id="CHEBI:18420"/>
    </cofactor>
</comment>
<comment type="subunit">
    <text evidence="1">Homodimer.</text>
</comment>
<comment type="miscellaneous">
    <text evidence="1">A single active site specifically recognizes both ATP and CTP and is responsible for their addition.</text>
</comment>
<comment type="similarity">
    <text evidence="1">Belongs to the tRNA nucleotidyltransferase/poly(A) polymerase family. Bacterial CCA-adding enzyme type 3 subfamily.</text>
</comment>
<protein>
    <recommendedName>
        <fullName evidence="1">CCA-adding enzyme</fullName>
        <ecNumber evidence="1">2.7.7.72</ecNumber>
    </recommendedName>
    <alternativeName>
        <fullName evidence="1">CCA tRNA nucleotidyltransferase</fullName>
    </alternativeName>
    <alternativeName>
        <fullName evidence="1">tRNA CCA-pyrophosphorylase</fullName>
    </alternativeName>
    <alternativeName>
        <fullName evidence="1">tRNA adenylyl-/cytidylyl- transferase</fullName>
    </alternativeName>
    <alternativeName>
        <fullName evidence="1">tRNA nucleotidyltransferase</fullName>
    </alternativeName>
    <alternativeName>
        <fullName evidence="1">tRNA-NT</fullName>
    </alternativeName>
</protein>
<sequence length="401" mass="45399">MKITQLPQEFIDAQPILTKLEDAGFEAYFVGGSVRDTMLGKTIHDVDIASSAFPEEVKSLFHNTVDTGIQHGTVMVLDHGTGYEITTFRVESTYTDFRRPDHVTFVRSLEEDLKRRDFTINALAMRHDGEVLDLFDGLEDMKKGVIRAVGDAEKRFTEDALRMMRALRFSAQLGFNIEADTQKALVDLAPNLAKIAVERVRVEFEKLLLGSQASQSLELALRDQVMNYLPGPHIEDWSSIIDDLNKDQATNYTVAWAHILSRTQFDDKKRRQFMYDWKMSRNVMKTVNAIVPIVHNPKKSTVFDIYQVLAYQEELLEVLSLTGSQPETIQRISHIIEMLPITKAADLNISGGELIRSGILTPGPLLGRVLKKIEYAVVVGDILNDHDALEKFAKEYVNDQN</sequence>
<dbReference type="EC" id="2.7.7.72" evidence="1"/>
<dbReference type="EMBL" id="CP000414">
    <property type="protein sequence ID" value="ABJ61865.1"/>
    <property type="molecule type" value="Genomic_DNA"/>
</dbReference>
<dbReference type="RefSeq" id="WP_011679543.1">
    <property type="nucleotide sequence ID" value="NC_008531.1"/>
</dbReference>
<dbReference type="SMR" id="Q03Y57"/>
<dbReference type="EnsemblBacteria" id="ABJ61865">
    <property type="protein sequence ID" value="ABJ61865"/>
    <property type="gene ID" value="LEUM_0756"/>
</dbReference>
<dbReference type="GeneID" id="29576381"/>
<dbReference type="KEGG" id="lme:LEUM_0756"/>
<dbReference type="eggNOG" id="COG0617">
    <property type="taxonomic scope" value="Bacteria"/>
</dbReference>
<dbReference type="HOGENOM" id="CLU_015961_3_1_9"/>
<dbReference type="Proteomes" id="UP000000362">
    <property type="component" value="Chromosome"/>
</dbReference>
<dbReference type="GO" id="GO:0005524">
    <property type="term" value="F:ATP binding"/>
    <property type="evidence" value="ECO:0007669"/>
    <property type="project" value="UniProtKB-UniRule"/>
</dbReference>
<dbReference type="GO" id="GO:0004810">
    <property type="term" value="F:CCA tRNA nucleotidyltransferase activity"/>
    <property type="evidence" value="ECO:0007669"/>
    <property type="project" value="UniProtKB-UniRule"/>
</dbReference>
<dbReference type="GO" id="GO:0000287">
    <property type="term" value="F:magnesium ion binding"/>
    <property type="evidence" value="ECO:0007669"/>
    <property type="project" value="UniProtKB-UniRule"/>
</dbReference>
<dbReference type="GO" id="GO:0000049">
    <property type="term" value="F:tRNA binding"/>
    <property type="evidence" value="ECO:0007669"/>
    <property type="project" value="UniProtKB-UniRule"/>
</dbReference>
<dbReference type="GO" id="GO:0042245">
    <property type="term" value="P:RNA repair"/>
    <property type="evidence" value="ECO:0007669"/>
    <property type="project" value="UniProtKB-KW"/>
</dbReference>
<dbReference type="GO" id="GO:0001680">
    <property type="term" value="P:tRNA 3'-terminal CCA addition"/>
    <property type="evidence" value="ECO:0007669"/>
    <property type="project" value="UniProtKB-UniRule"/>
</dbReference>
<dbReference type="CDD" id="cd05398">
    <property type="entry name" value="NT_ClassII-CCAase"/>
    <property type="match status" value="1"/>
</dbReference>
<dbReference type="Gene3D" id="1.10.246.80">
    <property type="match status" value="1"/>
</dbReference>
<dbReference type="Gene3D" id="3.30.460.10">
    <property type="entry name" value="Beta Polymerase, domain 2"/>
    <property type="match status" value="1"/>
</dbReference>
<dbReference type="Gene3D" id="1.10.3090.10">
    <property type="entry name" value="cca-adding enzyme, domain 2"/>
    <property type="match status" value="1"/>
</dbReference>
<dbReference type="HAMAP" id="MF_01263">
    <property type="entry name" value="CCA_bact_type3"/>
    <property type="match status" value="1"/>
</dbReference>
<dbReference type="InterPro" id="IPR050264">
    <property type="entry name" value="Bact_CCA-adding_enz_type3_sf"/>
</dbReference>
<dbReference type="InterPro" id="IPR032810">
    <property type="entry name" value="CCA-adding_enz_C"/>
</dbReference>
<dbReference type="InterPro" id="IPR023068">
    <property type="entry name" value="CCA-adding_enz_firmicutes"/>
</dbReference>
<dbReference type="InterPro" id="IPR043519">
    <property type="entry name" value="NT_sf"/>
</dbReference>
<dbReference type="InterPro" id="IPR002646">
    <property type="entry name" value="PolA_pol_head_dom"/>
</dbReference>
<dbReference type="InterPro" id="IPR032828">
    <property type="entry name" value="PolyA_RNA-bd"/>
</dbReference>
<dbReference type="NCBIfam" id="NF009814">
    <property type="entry name" value="PRK13299.1"/>
    <property type="match status" value="1"/>
</dbReference>
<dbReference type="PANTHER" id="PTHR46173">
    <property type="entry name" value="CCA TRNA NUCLEOTIDYLTRANSFERASE 1, MITOCHONDRIAL"/>
    <property type="match status" value="1"/>
</dbReference>
<dbReference type="PANTHER" id="PTHR46173:SF1">
    <property type="entry name" value="CCA TRNA NUCLEOTIDYLTRANSFERASE 1, MITOCHONDRIAL"/>
    <property type="match status" value="1"/>
</dbReference>
<dbReference type="Pfam" id="PF01743">
    <property type="entry name" value="PolyA_pol"/>
    <property type="match status" value="1"/>
</dbReference>
<dbReference type="Pfam" id="PF12627">
    <property type="entry name" value="PolyA_pol_RNAbd"/>
    <property type="match status" value="1"/>
</dbReference>
<dbReference type="Pfam" id="PF13735">
    <property type="entry name" value="tRNA_NucTran2_2"/>
    <property type="match status" value="1"/>
</dbReference>
<dbReference type="SUPFAM" id="SSF81301">
    <property type="entry name" value="Nucleotidyltransferase"/>
    <property type="match status" value="1"/>
</dbReference>
<dbReference type="SUPFAM" id="SSF81891">
    <property type="entry name" value="Poly A polymerase C-terminal region-like"/>
    <property type="match status" value="1"/>
</dbReference>
<accession>Q03Y57</accession>
<feature type="chain" id="PRO_1000054330" description="CCA-adding enzyme">
    <location>
        <begin position="1"/>
        <end position="401"/>
    </location>
</feature>
<feature type="binding site" evidence="1">
    <location>
        <position position="32"/>
    </location>
    <ligand>
        <name>ATP</name>
        <dbReference type="ChEBI" id="CHEBI:30616"/>
    </ligand>
</feature>
<feature type="binding site" evidence="1">
    <location>
        <position position="32"/>
    </location>
    <ligand>
        <name>CTP</name>
        <dbReference type="ChEBI" id="CHEBI:37563"/>
    </ligand>
</feature>
<feature type="binding site" evidence="1">
    <location>
        <position position="35"/>
    </location>
    <ligand>
        <name>ATP</name>
        <dbReference type="ChEBI" id="CHEBI:30616"/>
    </ligand>
</feature>
<feature type="binding site" evidence="1">
    <location>
        <position position="35"/>
    </location>
    <ligand>
        <name>CTP</name>
        <dbReference type="ChEBI" id="CHEBI:37563"/>
    </ligand>
</feature>
<feature type="binding site" evidence="1">
    <location>
        <position position="45"/>
    </location>
    <ligand>
        <name>Mg(2+)</name>
        <dbReference type="ChEBI" id="CHEBI:18420"/>
    </ligand>
</feature>
<feature type="binding site" evidence="1">
    <location>
        <position position="47"/>
    </location>
    <ligand>
        <name>Mg(2+)</name>
        <dbReference type="ChEBI" id="CHEBI:18420"/>
    </ligand>
</feature>
<feature type="binding site" evidence="1">
    <location>
        <position position="116"/>
    </location>
    <ligand>
        <name>ATP</name>
        <dbReference type="ChEBI" id="CHEBI:30616"/>
    </ligand>
</feature>
<feature type="binding site" evidence="1">
    <location>
        <position position="116"/>
    </location>
    <ligand>
        <name>CTP</name>
        <dbReference type="ChEBI" id="CHEBI:37563"/>
    </ligand>
</feature>
<feature type="binding site" evidence="1">
    <location>
        <position position="159"/>
    </location>
    <ligand>
        <name>ATP</name>
        <dbReference type="ChEBI" id="CHEBI:30616"/>
    </ligand>
</feature>
<feature type="binding site" evidence="1">
    <location>
        <position position="159"/>
    </location>
    <ligand>
        <name>CTP</name>
        <dbReference type="ChEBI" id="CHEBI:37563"/>
    </ligand>
</feature>
<feature type="binding site" evidence="1">
    <location>
        <position position="162"/>
    </location>
    <ligand>
        <name>ATP</name>
        <dbReference type="ChEBI" id="CHEBI:30616"/>
    </ligand>
</feature>
<feature type="binding site" evidence="1">
    <location>
        <position position="162"/>
    </location>
    <ligand>
        <name>CTP</name>
        <dbReference type="ChEBI" id="CHEBI:37563"/>
    </ligand>
</feature>
<feature type="binding site" evidence="1">
    <location>
        <position position="165"/>
    </location>
    <ligand>
        <name>ATP</name>
        <dbReference type="ChEBI" id="CHEBI:30616"/>
    </ligand>
</feature>
<feature type="binding site" evidence="1">
    <location>
        <position position="165"/>
    </location>
    <ligand>
        <name>CTP</name>
        <dbReference type="ChEBI" id="CHEBI:37563"/>
    </ligand>
</feature>
<feature type="binding site" evidence="1">
    <location>
        <position position="168"/>
    </location>
    <ligand>
        <name>ATP</name>
        <dbReference type="ChEBI" id="CHEBI:30616"/>
    </ligand>
</feature>
<feature type="binding site" evidence="1">
    <location>
        <position position="168"/>
    </location>
    <ligand>
        <name>CTP</name>
        <dbReference type="ChEBI" id="CHEBI:37563"/>
    </ligand>
</feature>